<sequence length="275" mass="30438">MPKVFLVKRRSLGVSVRSWDELPDEKRADTYIPVGLGRLLHDPPEDCRSDGGSSSGSGSSSAGEPGGAESSSSPHAPESETPEPGDAEGPDGHLATKQRPVARSKIKFTTGTCSDSVVHSCDLCGKGFRLQRMLNRHLKCHNQVKRHLCTFCGKGFNDTFDLKRHVRTHTGIRPYKCNVCNKAFTQRCSLESHLKKIHGVQQQYAYKQRRDKLYVCEDCGYTGPTQEDLYLHVNSAHPGSSFLKKTSKKLAALLQGKLTSAHQENTSLSEEEERK</sequence>
<proteinExistence type="evidence at protein level"/>
<evidence type="ECO:0000250" key="1">
    <source>
        <dbReference type="UniProtKB" id="Q8CIV7"/>
    </source>
</evidence>
<evidence type="ECO:0000255" key="2">
    <source>
        <dbReference type="PROSITE-ProRule" id="PRU00042"/>
    </source>
</evidence>
<evidence type="ECO:0000256" key="3">
    <source>
        <dbReference type="SAM" id="MobiDB-lite"/>
    </source>
</evidence>
<evidence type="ECO:0000269" key="4">
    <source>
    </source>
</evidence>
<evidence type="ECO:0000269" key="5">
    <source>
    </source>
</evidence>
<evidence type="ECO:0000269" key="6">
    <source>
    </source>
</evidence>
<evidence type="ECO:0000305" key="7"/>
<evidence type="ECO:0000312" key="8">
    <source>
        <dbReference type="HGNC" id="HGNC:15804"/>
    </source>
</evidence>
<evidence type="ECO:0007744" key="9">
    <source>
    </source>
</evidence>
<comment type="function">
    <text evidence="1 5">Zinc-finger transcription repressor factor (PubMed:19700410). Plays a critical role in maintaining the identity of epithelial lineages by suppressing epithelial-to mesenchymal transition (EMT) mainly through the repression of ZEB1, an EMT inducer (By similarity). Positively regulates neuronal differentiation (By similarity). Suppresses cell cycling and terminal differentiation of keratinocytes by directly repressing MYC and NOTCH1 (PubMed:19700410). Important for the correct development of primordial germ cells in embryos (By similarity). Plays dual functions in thermogenesis and adipogenesis to maintain energy balance. Essential for brown/beige adipose tissue-mediated thermogenesis, is necessary for the development of brown adipocytes. In white adipose tissues, limits adipogenesis by blocking CEBPA binding to its transcriptional targets and inhibiting its transcription factor activity (By similarity).</text>
</comment>
<comment type="subunit">
    <text evidence="1">Interacts (via zinc-finger domains) with CEBPA (via bZIP domain); the interaction inhibits the transcription factor activity of CEBPA and is required to repress adipogenesis.</text>
</comment>
<comment type="interaction">
    <interactant intactId="EBI-13007247">
        <id>Q9BRP0</id>
    </interactant>
    <interactant intactId="EBI-11035148">
        <id>Q8TF50</id>
        <label>ZNF526</label>
    </interactant>
    <organismsDiffer>false</organismsDiffer>
    <experiments>3</experiments>
</comment>
<comment type="subcellular location">
    <subcellularLocation>
        <location evidence="1">Nucleus</location>
    </subcellularLocation>
</comment>
<comment type="alternative products">
    <event type="alternative splicing"/>
    <isoform>
        <id>Q9BRP0-1</id>
        <name>1</name>
        <sequence type="displayed"/>
    </isoform>
    <isoform>
        <id>Q9BRP0-2</id>
        <name>2</name>
        <sequence type="described" ref="VSP_038260"/>
    </isoform>
</comment>
<comment type="tissue specificity">
    <text evidence="4 6">Expressed in testis, ovary, heart and skeletal muscle (PubMed:12213202). Expressed in the cornea, but absent from the corneal endothelium (PubMed:26749309).</text>
</comment>
<comment type="disease" evidence="6">
    <disease id="DI-02640">
        <name>Corneal dystrophy, posterior polymorphous, 1</name>
        <acronym>PPCD1</acronym>
        <description>A rare corneal disorder characterized by small aggregates of apparent vesicles bordered by a gray haze at the level of Descemet membrane, an altered corneal endothelial cell structure, and an unusual proliferation of endothelial cells. Symptoms can range from very aggressive to asymptomatic and non-progressive, even within the same family.</description>
        <dbReference type="MIM" id="122000"/>
    </disease>
    <text evidence="6">The disease is caused by variants affecting the gene represented in this entry. Disease-causing mutations in the OVOL2 promoter alter promoter activity, dysregulate OVOL2 expression, and probably induce OVOL2 ectopic expression in the corneal endothelium.</text>
</comment>
<comment type="similarity">
    <text evidence="7">Belongs to the krueppel C2H2-type zinc-finger protein family.</text>
</comment>
<accession>Q9BRP0</accession>
<accession>Q5T8B4</accession>
<accession>Q9BX22</accession>
<accession>Q9HA54</accession>
<accession>Q9Y4M0</accession>
<keyword id="KW-0025">Alternative splicing</keyword>
<keyword id="KW-1212">Corneal dystrophy</keyword>
<keyword id="KW-0217">Developmental protein</keyword>
<keyword id="KW-0238">DNA-binding</keyword>
<keyword id="KW-0479">Metal-binding</keyword>
<keyword id="KW-0539">Nucleus</keyword>
<keyword id="KW-0597">Phosphoprotein</keyword>
<keyword id="KW-1267">Proteomics identification</keyword>
<keyword id="KW-1185">Reference proteome</keyword>
<keyword id="KW-0677">Repeat</keyword>
<keyword id="KW-0804">Transcription</keyword>
<keyword id="KW-0805">Transcription regulation</keyword>
<keyword id="KW-0862">Zinc</keyword>
<keyword id="KW-0863">Zinc-finger</keyword>
<dbReference type="EMBL" id="AK022284">
    <property type="protein sequence ID" value="BAB14002.1"/>
    <property type="molecule type" value="mRNA"/>
</dbReference>
<dbReference type="EMBL" id="BT007295">
    <property type="protein sequence ID" value="AAP35959.1"/>
    <property type="molecule type" value="mRNA"/>
</dbReference>
<dbReference type="EMBL" id="AL121585">
    <property type="status" value="NOT_ANNOTATED_CDS"/>
    <property type="molecule type" value="Genomic_DNA"/>
</dbReference>
<dbReference type="EMBL" id="AL160411">
    <property type="status" value="NOT_ANNOTATED_CDS"/>
    <property type="molecule type" value="Genomic_DNA"/>
</dbReference>
<dbReference type="EMBL" id="CH471133">
    <property type="protein sequence ID" value="EAX10258.1"/>
    <property type="molecule type" value="Genomic_DNA"/>
</dbReference>
<dbReference type="EMBL" id="CH471133">
    <property type="protein sequence ID" value="EAX10259.1"/>
    <property type="molecule type" value="Genomic_DNA"/>
</dbReference>
<dbReference type="EMBL" id="BC006148">
    <property type="protein sequence ID" value="AAH06148.1"/>
    <property type="molecule type" value="mRNA"/>
</dbReference>
<dbReference type="EMBL" id="AL079276">
    <property type="protein sequence ID" value="CAB45151.1"/>
    <property type="molecule type" value="mRNA"/>
</dbReference>
<dbReference type="CCDS" id="CCDS13132.1">
    <molecule id="Q9BRP0-1"/>
</dbReference>
<dbReference type="RefSeq" id="NP_001290390.1">
    <molecule id="Q9BRP0-2"/>
    <property type="nucleotide sequence ID" value="NM_001303461.1"/>
</dbReference>
<dbReference type="RefSeq" id="NP_001290391.1">
    <molecule id="Q9BRP0-2"/>
    <property type="nucleotide sequence ID" value="NM_001303462.1"/>
</dbReference>
<dbReference type="RefSeq" id="NP_067043.2">
    <molecule id="Q9BRP0-1"/>
    <property type="nucleotide sequence ID" value="NM_021220.3"/>
</dbReference>
<dbReference type="SMR" id="Q9BRP0"/>
<dbReference type="BioGRID" id="121825">
    <property type="interactions" value="126"/>
</dbReference>
<dbReference type="CORUM" id="Q9BRP0"/>
<dbReference type="FunCoup" id="Q9BRP0">
    <property type="interactions" value="1008"/>
</dbReference>
<dbReference type="IntAct" id="Q9BRP0">
    <property type="interactions" value="25"/>
</dbReference>
<dbReference type="STRING" id="9606.ENSP00000278780"/>
<dbReference type="iPTMnet" id="Q9BRP0"/>
<dbReference type="PhosphoSitePlus" id="Q9BRP0"/>
<dbReference type="BioMuta" id="OVOL2"/>
<dbReference type="DMDM" id="23396998"/>
<dbReference type="jPOST" id="Q9BRP0"/>
<dbReference type="MassIVE" id="Q9BRP0"/>
<dbReference type="PaxDb" id="9606-ENSP00000278780"/>
<dbReference type="PeptideAtlas" id="Q9BRP0"/>
<dbReference type="ProteomicsDB" id="78792">
    <molecule id="Q9BRP0-1"/>
</dbReference>
<dbReference type="ProteomicsDB" id="78793">
    <molecule id="Q9BRP0-2"/>
</dbReference>
<dbReference type="Antibodypedia" id="24517">
    <property type="antibodies" value="175 antibodies from 26 providers"/>
</dbReference>
<dbReference type="DNASU" id="58495"/>
<dbReference type="Ensembl" id="ENST00000278780.7">
    <molecule id="Q9BRP0-1"/>
    <property type="protein sequence ID" value="ENSP00000278780.5"/>
    <property type="gene ID" value="ENSG00000125850.11"/>
</dbReference>
<dbReference type="GeneID" id="58495"/>
<dbReference type="KEGG" id="hsa:58495"/>
<dbReference type="MANE-Select" id="ENST00000278780.7">
    <property type="protein sequence ID" value="ENSP00000278780.5"/>
    <property type="RefSeq nucleotide sequence ID" value="NM_021220.4"/>
    <property type="RefSeq protein sequence ID" value="NP_067043.2"/>
</dbReference>
<dbReference type="UCSC" id="uc002wqi.1">
    <molecule id="Q9BRP0-1"/>
    <property type="organism name" value="human"/>
</dbReference>
<dbReference type="AGR" id="HGNC:15804"/>
<dbReference type="CTD" id="58495"/>
<dbReference type="DisGeNET" id="58495"/>
<dbReference type="GeneCards" id="OVOL2"/>
<dbReference type="HGNC" id="HGNC:15804">
    <property type="gene designation" value="OVOL2"/>
</dbReference>
<dbReference type="HPA" id="ENSG00000125850">
    <property type="expression patterns" value="Tissue enhanced (salivary gland, stomach)"/>
</dbReference>
<dbReference type="MalaCards" id="OVOL2"/>
<dbReference type="MIM" id="122000">
    <property type="type" value="phenotype"/>
</dbReference>
<dbReference type="MIM" id="616441">
    <property type="type" value="gene"/>
</dbReference>
<dbReference type="neXtProt" id="NX_Q9BRP0"/>
<dbReference type="OpenTargets" id="ENSG00000125850"/>
<dbReference type="Orphanet" id="98973">
    <property type="disease" value="Posterior polymorphous corneal dystrophy"/>
</dbReference>
<dbReference type="PharmGKB" id="PA38039"/>
<dbReference type="VEuPathDB" id="HostDB:ENSG00000125850"/>
<dbReference type="eggNOG" id="KOG3576">
    <property type="taxonomic scope" value="Eukaryota"/>
</dbReference>
<dbReference type="GeneTree" id="ENSGT00940000159359"/>
<dbReference type="HOGENOM" id="CLU_087964_0_0_1"/>
<dbReference type="InParanoid" id="Q9BRP0"/>
<dbReference type="OMA" id="PVSLDCM"/>
<dbReference type="OrthoDB" id="6508643at2759"/>
<dbReference type="PAN-GO" id="Q9BRP0">
    <property type="GO annotations" value="5 GO annotations based on evolutionary models"/>
</dbReference>
<dbReference type="PhylomeDB" id="Q9BRP0"/>
<dbReference type="TreeFam" id="TF337552"/>
<dbReference type="PathwayCommons" id="Q9BRP0"/>
<dbReference type="SignaLink" id="Q9BRP0"/>
<dbReference type="BioGRID-ORCS" id="58495">
    <property type="hits" value="56 hits in 1170 CRISPR screens"/>
</dbReference>
<dbReference type="ChiTaRS" id="OVOL2">
    <property type="organism name" value="human"/>
</dbReference>
<dbReference type="GenomeRNAi" id="58495"/>
<dbReference type="Pharos" id="Q9BRP0">
    <property type="development level" value="Tbio"/>
</dbReference>
<dbReference type="PRO" id="PR:Q9BRP0"/>
<dbReference type="Proteomes" id="UP000005640">
    <property type="component" value="Chromosome 20"/>
</dbReference>
<dbReference type="RNAct" id="Q9BRP0">
    <property type="molecule type" value="protein"/>
</dbReference>
<dbReference type="Bgee" id="ENSG00000125850">
    <property type="expression patterns" value="Expressed in pancreatic ductal cell and 132 other cell types or tissues"/>
</dbReference>
<dbReference type="GO" id="GO:0005634">
    <property type="term" value="C:nucleus"/>
    <property type="evidence" value="ECO:0000250"/>
    <property type="project" value="UniProtKB"/>
</dbReference>
<dbReference type="GO" id="GO:0003682">
    <property type="term" value="F:chromatin binding"/>
    <property type="evidence" value="ECO:0007669"/>
    <property type="project" value="Ensembl"/>
</dbReference>
<dbReference type="GO" id="GO:0001228">
    <property type="term" value="F:DNA-binding transcription activator activity, RNA polymerase II-specific"/>
    <property type="evidence" value="ECO:0007669"/>
    <property type="project" value="Ensembl"/>
</dbReference>
<dbReference type="GO" id="GO:0000981">
    <property type="term" value="F:DNA-binding transcription factor activity, RNA polymerase II-specific"/>
    <property type="evidence" value="ECO:0000318"/>
    <property type="project" value="GO_Central"/>
</dbReference>
<dbReference type="GO" id="GO:0001227">
    <property type="term" value="F:DNA-binding transcription repressor activity, RNA polymerase II-specific"/>
    <property type="evidence" value="ECO:0000250"/>
    <property type="project" value="ARUK-UCL"/>
</dbReference>
<dbReference type="GO" id="GO:0000978">
    <property type="term" value="F:RNA polymerase II cis-regulatory region sequence-specific DNA binding"/>
    <property type="evidence" value="ECO:0000318"/>
    <property type="project" value="GO_Central"/>
</dbReference>
<dbReference type="GO" id="GO:1990837">
    <property type="term" value="F:sequence-specific double-stranded DNA binding"/>
    <property type="evidence" value="ECO:0000314"/>
    <property type="project" value="ARUK-UCL"/>
</dbReference>
<dbReference type="GO" id="GO:0000976">
    <property type="term" value="F:transcription cis-regulatory region binding"/>
    <property type="evidence" value="ECO:0000314"/>
    <property type="project" value="BHF-UCL"/>
</dbReference>
<dbReference type="GO" id="GO:0008270">
    <property type="term" value="F:zinc ion binding"/>
    <property type="evidence" value="ECO:0007669"/>
    <property type="project" value="UniProtKB-KW"/>
</dbReference>
<dbReference type="GO" id="GO:0001525">
    <property type="term" value="P:angiogenesis"/>
    <property type="evidence" value="ECO:0007669"/>
    <property type="project" value="Ensembl"/>
</dbReference>
<dbReference type="GO" id="GO:0008283">
    <property type="term" value="P:cell population proliferation"/>
    <property type="evidence" value="ECO:0007669"/>
    <property type="project" value="Ensembl"/>
</dbReference>
<dbReference type="GO" id="GO:0009953">
    <property type="term" value="P:dorsal/ventral pattern formation"/>
    <property type="evidence" value="ECO:0007669"/>
    <property type="project" value="Ensembl"/>
</dbReference>
<dbReference type="GO" id="GO:0048557">
    <property type="term" value="P:embryonic digestive tract morphogenesis"/>
    <property type="evidence" value="ECO:0007669"/>
    <property type="project" value="Ensembl"/>
</dbReference>
<dbReference type="GO" id="GO:0060214">
    <property type="term" value="P:endocardium formation"/>
    <property type="evidence" value="ECO:0007669"/>
    <property type="project" value="Ensembl"/>
</dbReference>
<dbReference type="GO" id="GO:0009913">
    <property type="term" value="P:epidermal cell differentiation"/>
    <property type="evidence" value="ECO:0000318"/>
    <property type="project" value="GO_Central"/>
</dbReference>
<dbReference type="GO" id="GO:0001947">
    <property type="term" value="P:heart looping"/>
    <property type="evidence" value="ECO:0007669"/>
    <property type="project" value="Ensembl"/>
</dbReference>
<dbReference type="GO" id="GO:0060347">
    <property type="term" value="P:heart trabecula formation"/>
    <property type="evidence" value="ECO:0007669"/>
    <property type="project" value="Ensembl"/>
</dbReference>
<dbReference type="GO" id="GO:0060716">
    <property type="term" value="P:labyrinthine layer blood vessel development"/>
    <property type="evidence" value="ECO:0007669"/>
    <property type="project" value="Ensembl"/>
</dbReference>
<dbReference type="GO" id="GO:0010719">
    <property type="term" value="P:negative regulation of epithelial to mesenchymal transition"/>
    <property type="evidence" value="ECO:0000250"/>
    <property type="project" value="UniProtKB"/>
</dbReference>
<dbReference type="GO" id="GO:0010629">
    <property type="term" value="P:negative regulation of gene expression"/>
    <property type="evidence" value="ECO:0000250"/>
    <property type="project" value="ARUK-UCL"/>
</dbReference>
<dbReference type="GO" id="GO:0045617">
    <property type="term" value="P:negative regulation of keratinocyte differentiation"/>
    <property type="evidence" value="ECO:0000315"/>
    <property type="project" value="BHF-UCL"/>
</dbReference>
<dbReference type="GO" id="GO:0045746">
    <property type="term" value="P:negative regulation of Notch signaling pathway"/>
    <property type="evidence" value="ECO:0000314"/>
    <property type="project" value="BHF-UCL"/>
</dbReference>
<dbReference type="GO" id="GO:0060392">
    <property type="term" value="P:negative regulation of SMAD protein signal transduction"/>
    <property type="evidence" value="ECO:0000250"/>
    <property type="project" value="ARUK-UCL"/>
</dbReference>
<dbReference type="GO" id="GO:2000647">
    <property type="term" value="P:negative regulation of stem cell proliferation"/>
    <property type="evidence" value="ECO:0007669"/>
    <property type="project" value="Ensembl"/>
</dbReference>
<dbReference type="GO" id="GO:0010944">
    <property type="term" value="P:negative regulation of transcription by competitive promoter binding"/>
    <property type="evidence" value="ECO:0000314"/>
    <property type="project" value="BHF-UCL"/>
</dbReference>
<dbReference type="GO" id="GO:0030512">
    <property type="term" value="P:negative regulation of transforming growth factor beta receptor signaling pathway"/>
    <property type="evidence" value="ECO:0000250"/>
    <property type="project" value="ARUK-UCL"/>
</dbReference>
<dbReference type="GO" id="GO:0001755">
    <property type="term" value="P:neural crest cell migration"/>
    <property type="evidence" value="ECO:0007669"/>
    <property type="project" value="Ensembl"/>
</dbReference>
<dbReference type="GO" id="GO:0001842">
    <property type="term" value="P:neural fold formation"/>
    <property type="evidence" value="ECO:0007669"/>
    <property type="project" value="Ensembl"/>
</dbReference>
<dbReference type="GO" id="GO:0010628">
    <property type="term" value="P:positive regulation of gene expression"/>
    <property type="evidence" value="ECO:0000250"/>
    <property type="project" value="ARUK-UCL"/>
</dbReference>
<dbReference type="GO" id="GO:0045618">
    <property type="term" value="P:positive regulation of keratinocyte differentiation"/>
    <property type="evidence" value="ECO:0007669"/>
    <property type="project" value="Ensembl"/>
</dbReference>
<dbReference type="GO" id="GO:0051726">
    <property type="term" value="P:regulation of cell cycle"/>
    <property type="evidence" value="ECO:0000315"/>
    <property type="project" value="BHF-UCL"/>
</dbReference>
<dbReference type="GO" id="GO:0010837">
    <property type="term" value="P:regulation of keratinocyte proliferation"/>
    <property type="evidence" value="ECO:0000315"/>
    <property type="project" value="BHF-UCL"/>
</dbReference>
<dbReference type="GO" id="GO:0006357">
    <property type="term" value="P:regulation of transcription by RNA polymerase II"/>
    <property type="evidence" value="ECO:0000318"/>
    <property type="project" value="GO_Central"/>
</dbReference>
<dbReference type="FunFam" id="3.30.160.60:FF:001250">
    <property type="entry name" value="putative transcription factor ovo-like protein 3"/>
    <property type="match status" value="1"/>
</dbReference>
<dbReference type="FunFam" id="3.30.160.60:FF:000452">
    <property type="entry name" value="Transcription factor Ovo-like 2"/>
    <property type="match status" value="1"/>
</dbReference>
<dbReference type="Gene3D" id="3.30.160.60">
    <property type="entry name" value="Classic Zinc Finger"/>
    <property type="match status" value="2"/>
</dbReference>
<dbReference type="InterPro" id="IPR027756">
    <property type="entry name" value="Ovo-like"/>
</dbReference>
<dbReference type="InterPro" id="IPR036236">
    <property type="entry name" value="Znf_C2H2_sf"/>
</dbReference>
<dbReference type="InterPro" id="IPR013087">
    <property type="entry name" value="Znf_C2H2_type"/>
</dbReference>
<dbReference type="PANTHER" id="PTHR10032:SF193">
    <property type="entry name" value="TRANSCRIPTION FACTOR OVO-LIKE 2"/>
    <property type="match status" value="1"/>
</dbReference>
<dbReference type="PANTHER" id="PTHR10032">
    <property type="entry name" value="ZINC FINGER PROTEIN WITH KRAB AND SCAN DOMAINS"/>
    <property type="match status" value="1"/>
</dbReference>
<dbReference type="Pfam" id="PF00096">
    <property type="entry name" value="zf-C2H2"/>
    <property type="match status" value="2"/>
</dbReference>
<dbReference type="Pfam" id="PF13894">
    <property type="entry name" value="zf-C2H2_4"/>
    <property type="match status" value="1"/>
</dbReference>
<dbReference type="Pfam" id="PF13912">
    <property type="entry name" value="zf-C2H2_6"/>
    <property type="match status" value="1"/>
</dbReference>
<dbReference type="SMART" id="SM00355">
    <property type="entry name" value="ZnF_C2H2"/>
    <property type="match status" value="4"/>
</dbReference>
<dbReference type="SUPFAM" id="SSF57667">
    <property type="entry name" value="beta-beta-alpha zinc fingers"/>
    <property type="match status" value="2"/>
</dbReference>
<dbReference type="PROSITE" id="PS00028">
    <property type="entry name" value="ZINC_FINGER_C2H2_1"/>
    <property type="match status" value="3"/>
</dbReference>
<dbReference type="PROSITE" id="PS50157">
    <property type="entry name" value="ZINC_FINGER_C2H2_2"/>
    <property type="match status" value="4"/>
</dbReference>
<gene>
    <name evidence="8" type="primary">OVOL2</name>
    <name type="synonym">ZNF339</name>
</gene>
<organism>
    <name type="scientific">Homo sapiens</name>
    <name type="common">Human</name>
    <dbReference type="NCBI Taxonomy" id="9606"/>
    <lineage>
        <taxon>Eukaryota</taxon>
        <taxon>Metazoa</taxon>
        <taxon>Chordata</taxon>
        <taxon>Craniata</taxon>
        <taxon>Vertebrata</taxon>
        <taxon>Euteleostomi</taxon>
        <taxon>Mammalia</taxon>
        <taxon>Eutheria</taxon>
        <taxon>Euarchontoglires</taxon>
        <taxon>Primates</taxon>
        <taxon>Haplorrhini</taxon>
        <taxon>Catarrhini</taxon>
        <taxon>Hominidae</taxon>
        <taxon>Homo</taxon>
    </lineage>
</organism>
<feature type="chain" id="PRO_0000047013" description="Transcription factor Ovo-like 2">
    <location>
        <begin position="1"/>
        <end position="275"/>
    </location>
</feature>
<feature type="zinc finger region" description="C2H2-type 1" evidence="2">
    <location>
        <begin position="119"/>
        <end position="141"/>
    </location>
</feature>
<feature type="zinc finger region" description="C2H2-type 2" evidence="2">
    <location>
        <begin position="147"/>
        <end position="169"/>
    </location>
</feature>
<feature type="zinc finger region" description="C2H2-type 3" evidence="2">
    <location>
        <begin position="175"/>
        <end position="198"/>
    </location>
</feature>
<feature type="zinc finger region" description="C2H2-type 4" evidence="2">
    <location>
        <begin position="214"/>
        <end position="237"/>
    </location>
</feature>
<feature type="region of interest" description="Disordered" evidence="3">
    <location>
        <begin position="15"/>
        <end position="101"/>
    </location>
</feature>
<feature type="compositionally biased region" description="Basic and acidic residues" evidence="3">
    <location>
        <begin position="18"/>
        <end position="29"/>
    </location>
</feature>
<feature type="compositionally biased region" description="Basic and acidic residues" evidence="3">
    <location>
        <begin position="39"/>
        <end position="49"/>
    </location>
</feature>
<feature type="compositionally biased region" description="Low complexity" evidence="3">
    <location>
        <begin position="56"/>
        <end position="76"/>
    </location>
</feature>
<feature type="compositionally biased region" description="Acidic residues" evidence="3">
    <location>
        <begin position="80"/>
        <end position="89"/>
    </location>
</feature>
<feature type="modified residue" description="Phosphoserine" evidence="9">
    <location>
        <position position="269"/>
    </location>
</feature>
<feature type="splice variant" id="VSP_038260" description="In isoform 2." evidence="7">
    <location>
        <begin position="1"/>
        <end position="132"/>
    </location>
</feature>
<feature type="sequence conflict" description="In Ref. 1; BAB14002." evidence="7" ref="1">
    <original>E</original>
    <variation>G</variation>
    <location>
        <position position="264"/>
    </location>
</feature>
<name>OVOL2_HUMAN</name>
<protein>
    <recommendedName>
        <fullName evidence="7">Transcription factor Ovo-like 2</fullName>
        <shortName>hOvo2</shortName>
    </recommendedName>
    <alternativeName>
        <fullName>Zinc finger protein 339</fullName>
    </alternativeName>
</protein>
<reference key="1">
    <citation type="journal article" date="2004" name="Nat. Genet.">
        <title>Complete sequencing and characterization of 21,243 full-length human cDNAs.</title>
        <authorList>
            <person name="Ota T."/>
            <person name="Suzuki Y."/>
            <person name="Nishikawa T."/>
            <person name="Otsuki T."/>
            <person name="Sugiyama T."/>
            <person name="Irie R."/>
            <person name="Wakamatsu A."/>
            <person name="Hayashi K."/>
            <person name="Sato H."/>
            <person name="Nagai K."/>
            <person name="Kimura K."/>
            <person name="Makita H."/>
            <person name="Sekine M."/>
            <person name="Obayashi M."/>
            <person name="Nishi T."/>
            <person name="Shibahara T."/>
            <person name="Tanaka T."/>
            <person name="Ishii S."/>
            <person name="Yamamoto J."/>
            <person name="Saito K."/>
            <person name="Kawai Y."/>
            <person name="Isono Y."/>
            <person name="Nakamura Y."/>
            <person name="Nagahari K."/>
            <person name="Murakami K."/>
            <person name="Yasuda T."/>
            <person name="Iwayanagi T."/>
            <person name="Wagatsuma M."/>
            <person name="Shiratori A."/>
            <person name="Sudo H."/>
            <person name="Hosoiri T."/>
            <person name="Kaku Y."/>
            <person name="Kodaira H."/>
            <person name="Kondo H."/>
            <person name="Sugawara M."/>
            <person name="Takahashi M."/>
            <person name="Kanda K."/>
            <person name="Yokoi T."/>
            <person name="Furuya T."/>
            <person name="Kikkawa E."/>
            <person name="Omura Y."/>
            <person name="Abe K."/>
            <person name="Kamihara K."/>
            <person name="Katsuta N."/>
            <person name="Sato K."/>
            <person name="Tanikawa M."/>
            <person name="Yamazaki M."/>
            <person name="Ninomiya K."/>
            <person name="Ishibashi T."/>
            <person name="Yamashita H."/>
            <person name="Murakawa K."/>
            <person name="Fujimori K."/>
            <person name="Tanai H."/>
            <person name="Kimata M."/>
            <person name="Watanabe M."/>
            <person name="Hiraoka S."/>
            <person name="Chiba Y."/>
            <person name="Ishida S."/>
            <person name="Ono Y."/>
            <person name="Takiguchi S."/>
            <person name="Watanabe S."/>
            <person name="Yosida M."/>
            <person name="Hotuta T."/>
            <person name="Kusano J."/>
            <person name="Kanehori K."/>
            <person name="Takahashi-Fujii A."/>
            <person name="Hara H."/>
            <person name="Tanase T.-O."/>
            <person name="Nomura Y."/>
            <person name="Togiya S."/>
            <person name="Komai F."/>
            <person name="Hara R."/>
            <person name="Takeuchi K."/>
            <person name="Arita M."/>
            <person name="Imose N."/>
            <person name="Musashino K."/>
            <person name="Yuuki H."/>
            <person name="Oshima A."/>
            <person name="Sasaki N."/>
            <person name="Aotsuka S."/>
            <person name="Yoshikawa Y."/>
            <person name="Matsunawa H."/>
            <person name="Ichihara T."/>
            <person name="Shiohata N."/>
            <person name="Sano S."/>
            <person name="Moriya S."/>
            <person name="Momiyama H."/>
            <person name="Satoh N."/>
            <person name="Takami S."/>
            <person name="Terashima Y."/>
            <person name="Suzuki O."/>
            <person name="Nakagawa S."/>
            <person name="Senoh A."/>
            <person name="Mizoguchi H."/>
            <person name="Goto Y."/>
            <person name="Shimizu F."/>
            <person name="Wakebe H."/>
            <person name="Hishigaki H."/>
            <person name="Watanabe T."/>
            <person name="Sugiyama A."/>
            <person name="Takemoto M."/>
            <person name="Kawakami B."/>
            <person name="Yamazaki M."/>
            <person name="Watanabe K."/>
            <person name="Kumagai A."/>
            <person name="Itakura S."/>
            <person name="Fukuzumi Y."/>
            <person name="Fujimori Y."/>
            <person name="Komiyama M."/>
            <person name="Tashiro H."/>
            <person name="Tanigami A."/>
            <person name="Fujiwara T."/>
            <person name="Ono T."/>
            <person name="Yamada K."/>
            <person name="Fujii Y."/>
            <person name="Ozaki K."/>
            <person name="Hirao M."/>
            <person name="Ohmori Y."/>
            <person name="Kawabata A."/>
            <person name="Hikiji T."/>
            <person name="Kobatake N."/>
            <person name="Inagaki H."/>
            <person name="Ikema Y."/>
            <person name="Okamoto S."/>
            <person name="Okitani R."/>
            <person name="Kawakami T."/>
            <person name="Noguchi S."/>
            <person name="Itoh T."/>
            <person name="Shigeta K."/>
            <person name="Senba T."/>
            <person name="Matsumura K."/>
            <person name="Nakajima Y."/>
            <person name="Mizuno T."/>
            <person name="Morinaga M."/>
            <person name="Sasaki M."/>
            <person name="Togashi T."/>
            <person name="Oyama M."/>
            <person name="Hata H."/>
            <person name="Watanabe M."/>
            <person name="Komatsu T."/>
            <person name="Mizushima-Sugano J."/>
            <person name="Satoh T."/>
            <person name="Shirai Y."/>
            <person name="Takahashi Y."/>
            <person name="Nakagawa K."/>
            <person name="Okumura K."/>
            <person name="Nagase T."/>
            <person name="Nomura N."/>
            <person name="Kikuchi H."/>
            <person name="Masuho Y."/>
            <person name="Yamashita R."/>
            <person name="Nakai K."/>
            <person name="Yada T."/>
            <person name="Nakamura Y."/>
            <person name="Ohara O."/>
            <person name="Isogai T."/>
            <person name="Sugano S."/>
        </authorList>
    </citation>
    <scope>NUCLEOTIDE SEQUENCE [LARGE SCALE MRNA] (ISOFORM 1)</scope>
    <source>
        <tissue>Mammary gland</tissue>
    </source>
</reference>
<reference key="2">
    <citation type="submission" date="2003-08" db="EMBL/GenBank/DDBJ databases">
        <title>Cloning of human full-length CDSs in BD Creator(TM) system donor vector.</title>
        <authorList>
            <person name="Kalnine N."/>
            <person name="Chen X."/>
            <person name="Rolfs A."/>
            <person name="Halleck A."/>
            <person name="Hines L."/>
            <person name="Eisenstein S."/>
            <person name="Koundinya M."/>
            <person name="Raphael J."/>
            <person name="Moreira D."/>
            <person name="Kelley T."/>
            <person name="LaBaer J."/>
            <person name="Lin Y."/>
            <person name="Phelan M."/>
            <person name="Farmer A."/>
        </authorList>
    </citation>
    <scope>NUCLEOTIDE SEQUENCE [LARGE SCALE MRNA] (ISOFORM 1)</scope>
</reference>
<reference key="3">
    <citation type="journal article" date="2001" name="Nature">
        <title>The DNA sequence and comparative analysis of human chromosome 20.</title>
        <authorList>
            <person name="Deloukas P."/>
            <person name="Matthews L.H."/>
            <person name="Ashurst J.L."/>
            <person name="Burton J."/>
            <person name="Gilbert J.G.R."/>
            <person name="Jones M."/>
            <person name="Stavrides G."/>
            <person name="Almeida J.P."/>
            <person name="Babbage A.K."/>
            <person name="Bagguley C.L."/>
            <person name="Bailey J."/>
            <person name="Barlow K.F."/>
            <person name="Bates K.N."/>
            <person name="Beard L.M."/>
            <person name="Beare D.M."/>
            <person name="Beasley O.P."/>
            <person name="Bird C.P."/>
            <person name="Blakey S.E."/>
            <person name="Bridgeman A.M."/>
            <person name="Brown A.J."/>
            <person name="Buck D."/>
            <person name="Burrill W.D."/>
            <person name="Butler A.P."/>
            <person name="Carder C."/>
            <person name="Carter N.P."/>
            <person name="Chapman J.C."/>
            <person name="Clamp M."/>
            <person name="Clark G."/>
            <person name="Clark L.N."/>
            <person name="Clark S.Y."/>
            <person name="Clee C.M."/>
            <person name="Clegg S."/>
            <person name="Cobley V.E."/>
            <person name="Collier R.E."/>
            <person name="Connor R.E."/>
            <person name="Corby N.R."/>
            <person name="Coulson A."/>
            <person name="Coville G.J."/>
            <person name="Deadman R."/>
            <person name="Dhami P.D."/>
            <person name="Dunn M."/>
            <person name="Ellington A.G."/>
            <person name="Frankland J.A."/>
            <person name="Fraser A."/>
            <person name="French L."/>
            <person name="Garner P."/>
            <person name="Grafham D.V."/>
            <person name="Griffiths C."/>
            <person name="Griffiths M.N.D."/>
            <person name="Gwilliam R."/>
            <person name="Hall R.E."/>
            <person name="Hammond S."/>
            <person name="Harley J.L."/>
            <person name="Heath P.D."/>
            <person name="Ho S."/>
            <person name="Holden J.L."/>
            <person name="Howden P.J."/>
            <person name="Huckle E."/>
            <person name="Hunt A.R."/>
            <person name="Hunt S.E."/>
            <person name="Jekosch K."/>
            <person name="Johnson C.M."/>
            <person name="Johnson D."/>
            <person name="Kay M.P."/>
            <person name="Kimberley A.M."/>
            <person name="King A."/>
            <person name="Knights A."/>
            <person name="Laird G.K."/>
            <person name="Lawlor S."/>
            <person name="Lehvaeslaiho M.H."/>
            <person name="Leversha M.A."/>
            <person name="Lloyd C."/>
            <person name="Lloyd D.M."/>
            <person name="Lovell J.D."/>
            <person name="Marsh V.L."/>
            <person name="Martin S.L."/>
            <person name="McConnachie L.J."/>
            <person name="McLay K."/>
            <person name="McMurray A.A."/>
            <person name="Milne S.A."/>
            <person name="Mistry D."/>
            <person name="Moore M.J.F."/>
            <person name="Mullikin J.C."/>
            <person name="Nickerson T."/>
            <person name="Oliver K."/>
            <person name="Parker A."/>
            <person name="Patel R."/>
            <person name="Pearce T.A.V."/>
            <person name="Peck A.I."/>
            <person name="Phillimore B.J.C.T."/>
            <person name="Prathalingam S.R."/>
            <person name="Plumb R.W."/>
            <person name="Ramsay H."/>
            <person name="Rice C.M."/>
            <person name="Ross M.T."/>
            <person name="Scott C.E."/>
            <person name="Sehra H.K."/>
            <person name="Shownkeen R."/>
            <person name="Sims S."/>
            <person name="Skuce C.D."/>
            <person name="Smith M.L."/>
            <person name="Soderlund C."/>
            <person name="Steward C.A."/>
            <person name="Sulston J.E."/>
            <person name="Swann R.M."/>
            <person name="Sycamore N."/>
            <person name="Taylor R."/>
            <person name="Tee L."/>
            <person name="Thomas D.W."/>
            <person name="Thorpe A."/>
            <person name="Tracey A."/>
            <person name="Tromans A.C."/>
            <person name="Vaudin M."/>
            <person name="Wall M."/>
            <person name="Wallis J.M."/>
            <person name="Whitehead S.L."/>
            <person name="Whittaker P."/>
            <person name="Willey D.L."/>
            <person name="Williams L."/>
            <person name="Williams S.A."/>
            <person name="Wilming L."/>
            <person name="Wray P.W."/>
            <person name="Hubbard T."/>
            <person name="Durbin R.M."/>
            <person name="Bentley D.R."/>
            <person name="Beck S."/>
            <person name="Rogers J."/>
        </authorList>
    </citation>
    <scope>NUCLEOTIDE SEQUENCE [LARGE SCALE GENOMIC DNA]</scope>
</reference>
<reference key="4">
    <citation type="submission" date="2005-07" db="EMBL/GenBank/DDBJ databases">
        <authorList>
            <person name="Mural R.J."/>
            <person name="Istrail S."/>
            <person name="Sutton G.G."/>
            <person name="Florea L."/>
            <person name="Halpern A.L."/>
            <person name="Mobarry C.M."/>
            <person name="Lippert R."/>
            <person name="Walenz B."/>
            <person name="Shatkay H."/>
            <person name="Dew I."/>
            <person name="Miller J.R."/>
            <person name="Flanigan M.J."/>
            <person name="Edwards N.J."/>
            <person name="Bolanos R."/>
            <person name="Fasulo D."/>
            <person name="Halldorsson B.V."/>
            <person name="Hannenhalli S."/>
            <person name="Turner R."/>
            <person name="Yooseph S."/>
            <person name="Lu F."/>
            <person name="Nusskern D.R."/>
            <person name="Shue B.C."/>
            <person name="Zheng X.H."/>
            <person name="Zhong F."/>
            <person name="Delcher A.L."/>
            <person name="Huson D.H."/>
            <person name="Kravitz S.A."/>
            <person name="Mouchard L."/>
            <person name="Reinert K."/>
            <person name="Remington K.A."/>
            <person name="Clark A.G."/>
            <person name="Waterman M.S."/>
            <person name="Eichler E.E."/>
            <person name="Adams M.D."/>
            <person name="Hunkapiller M.W."/>
            <person name="Myers E.W."/>
            <person name="Venter J.C."/>
        </authorList>
    </citation>
    <scope>NUCLEOTIDE SEQUENCE [LARGE SCALE GENOMIC DNA]</scope>
</reference>
<reference key="5">
    <citation type="journal article" date="2004" name="Genome Res.">
        <title>The status, quality, and expansion of the NIH full-length cDNA project: the Mammalian Gene Collection (MGC).</title>
        <authorList>
            <consortium name="The MGC Project Team"/>
        </authorList>
    </citation>
    <scope>NUCLEOTIDE SEQUENCE [LARGE SCALE MRNA] (ISOFORM 1)</scope>
    <source>
        <tissue>Placenta</tissue>
    </source>
</reference>
<reference key="6">
    <citation type="submission" date="1999-06" db="EMBL/GenBank/DDBJ databases">
        <authorList>
            <consortium name="The European IMAGE consortium"/>
        </authorList>
    </citation>
    <scope>NUCLEOTIDE SEQUENCE [LARGE SCALE MRNA] OF 59-275 (ISOFORM 1)</scope>
</reference>
<reference key="7">
    <citation type="journal article" date="2002" name="Genomics">
        <title>Ovol2, a mammalian homolog of Drosophila ovo: gene structure, chromosomal mapping, and aberrant expression in blind-sterile mice.</title>
        <authorList>
            <person name="Li B."/>
            <person name="Dai Q."/>
            <person name="Li L."/>
            <person name="Nair M."/>
            <person name="Mackay D.R."/>
            <person name="Dai X."/>
        </authorList>
    </citation>
    <scope>TISSUE SPECIFICITY</scope>
    <scope>ALTERNATIVE SPLICING</scope>
</reference>
<reference key="8">
    <citation type="journal article" date="2009" name="J. Biol. Chem.">
        <title>Ovol2 suppresses cell cycling and terminal differentiation of keratinocytes by directly repressing c-Myc and Notch1.</title>
        <authorList>
            <person name="Wells J."/>
            <person name="Lee B."/>
            <person name="Cai A.Q."/>
            <person name="Karapetyan A."/>
            <person name="Lee W.J."/>
            <person name="Rugg E."/>
            <person name="Sinha S."/>
            <person name="Nie Q."/>
            <person name="Dai X."/>
        </authorList>
    </citation>
    <scope>FUNCTION</scope>
</reference>
<reference key="9">
    <citation type="journal article" date="2011" name="Sci. Signal.">
        <title>System-wide temporal characterization of the proteome and phosphoproteome of human embryonic stem cell differentiation.</title>
        <authorList>
            <person name="Rigbolt K.T."/>
            <person name="Prokhorova T.A."/>
            <person name="Akimov V."/>
            <person name="Henningsen J."/>
            <person name="Johansen P.T."/>
            <person name="Kratchmarova I."/>
            <person name="Kassem M."/>
            <person name="Mann M."/>
            <person name="Olsen J.V."/>
            <person name="Blagoev B."/>
        </authorList>
    </citation>
    <scope>PHOSPHORYLATION [LARGE SCALE ANALYSIS] AT SER-269</scope>
    <scope>IDENTIFICATION BY MASS SPECTROMETRY [LARGE SCALE ANALYSIS]</scope>
</reference>
<reference key="10">
    <citation type="journal article" date="2016" name="Am. J. Hum. Genet.">
        <title>Autosomal-dominant corneal endothelial dystrophies CHED1 and PPCD1 are allelic disorders caused by non-coding mutations in the promoter of OVOL2.</title>
        <authorList>
            <person name="Davidson A.E."/>
            <person name="Liskova P."/>
            <person name="Evans C.J."/>
            <person name="Dudakova L."/>
            <person name="Noskova L."/>
            <person name="Pontikos N."/>
            <person name="Hartmannova H."/>
            <person name="Hodanova K."/>
            <person name="Stranecky V."/>
            <person name="Kozmik Z."/>
            <person name="Levis H.J."/>
            <person name="Idigo N."/>
            <person name="Sasai N."/>
            <person name="Maher G.J."/>
            <person name="Bellingham J."/>
            <person name="Veli N."/>
            <person name="Ebenezer N.D."/>
            <person name="Cheetham M.E."/>
            <person name="Daniels J.T."/>
            <person name="Thaung C.M."/>
            <person name="Jirsova K."/>
            <person name="Plagnol V."/>
            <person name="Filipec M."/>
            <person name="Kmoch S."/>
            <person name="Tuft S.J."/>
            <person name="Hardcastle A.J."/>
        </authorList>
    </citation>
    <scope>TISSUE SPECIFICITY</scope>
    <scope>INVOLVEMENT IN PPCD1</scope>
</reference>